<reference key="1">
    <citation type="journal article" date="2009" name="Appl. Environ. Microbiol.">
        <title>Metabolic versatility and indigenous origin of the archaeon Thermococcus sibiricus, isolated from a siberian oil reservoir, as revealed by genome analysis.</title>
        <authorList>
            <person name="Mardanov A.V."/>
            <person name="Ravin N.V."/>
            <person name="Svetlitchnyi V.A."/>
            <person name="Beletsky A.V."/>
            <person name="Miroshnichenko M.L."/>
            <person name="Bonch-Osmolovskaya E.A."/>
            <person name="Skryabin K.G."/>
        </authorList>
    </citation>
    <scope>NUCLEOTIDE SEQUENCE [LARGE SCALE GENOMIC DNA]</scope>
    <source>
        <strain>DSM 12597 / MM 739</strain>
    </source>
</reference>
<feature type="chain" id="PRO_1000204023" description="NH(3)-dependent NAD(+) synthetase">
    <location>
        <begin position="1"/>
        <end position="254"/>
    </location>
</feature>
<feature type="binding site" evidence="1">
    <location>
        <begin position="32"/>
        <end position="39"/>
    </location>
    <ligand>
        <name>ATP</name>
        <dbReference type="ChEBI" id="CHEBI:30616"/>
    </ligand>
</feature>
<feature type="binding site" evidence="1">
    <location>
        <position position="38"/>
    </location>
    <ligand>
        <name>Mg(2+)</name>
        <dbReference type="ChEBI" id="CHEBI:18420"/>
    </ligand>
</feature>
<feature type="binding site" evidence="1">
    <location>
        <position position="113"/>
    </location>
    <ligand>
        <name>deamido-NAD(+)</name>
        <dbReference type="ChEBI" id="CHEBI:58437"/>
    </ligand>
</feature>
<feature type="binding site" evidence="1">
    <location>
        <position position="133"/>
    </location>
    <ligand>
        <name>ATP</name>
        <dbReference type="ChEBI" id="CHEBI:30616"/>
    </ligand>
</feature>
<feature type="binding site" evidence="1">
    <location>
        <position position="138"/>
    </location>
    <ligand>
        <name>Mg(2+)</name>
        <dbReference type="ChEBI" id="CHEBI:18420"/>
    </ligand>
</feature>
<feature type="binding site" evidence="1">
    <location>
        <position position="146"/>
    </location>
    <ligand>
        <name>deamido-NAD(+)</name>
        <dbReference type="ChEBI" id="CHEBI:58437"/>
    </ligand>
</feature>
<feature type="binding site" evidence="1">
    <location>
        <position position="153"/>
    </location>
    <ligand>
        <name>deamido-NAD(+)</name>
        <dbReference type="ChEBI" id="CHEBI:58437"/>
    </ligand>
</feature>
<feature type="binding site" evidence="1">
    <location>
        <position position="162"/>
    </location>
    <ligand>
        <name>ATP</name>
        <dbReference type="ChEBI" id="CHEBI:30616"/>
    </ligand>
</feature>
<feature type="binding site" evidence="1">
    <location>
        <position position="184"/>
    </location>
    <ligand>
        <name>ATP</name>
        <dbReference type="ChEBI" id="CHEBI:30616"/>
    </ligand>
</feature>
<feature type="binding site" evidence="1">
    <location>
        <begin position="244"/>
        <end position="245"/>
    </location>
    <ligand>
        <name>deamido-NAD(+)</name>
        <dbReference type="ChEBI" id="CHEBI:58437"/>
    </ligand>
</feature>
<sequence length="254" mass="28720">MRSLDYAKVITKLVSFIQEKVEESNVKGVILGISGGVDSATVAYLAARAIGKEKVLGLVMPYHINRDVEDALLVCNNLGINYKVINIKSIVNEFEKNLDFELNNVSRGNIMSRTRMILLYAHANSKNYLVLGTSNRSEFLTGYFTKWGDSASDYAPLINLYKTEVWNIARILGVPNEIINKKPSAGLWEGQTDEKDLGITYKLLDEILYRLVDLKMKKENIARELNIPLNKVEYVESLIKKSEHKRKLPIGPEI</sequence>
<gene>
    <name evidence="1" type="primary">nadE</name>
    <name type="ordered locus">TSIB_1759</name>
</gene>
<name>NADE_THESM</name>
<organism>
    <name type="scientific">Thermococcus sibiricus (strain DSM 12597 / MM 739)</name>
    <dbReference type="NCBI Taxonomy" id="604354"/>
    <lineage>
        <taxon>Archaea</taxon>
        <taxon>Methanobacteriati</taxon>
        <taxon>Methanobacteriota</taxon>
        <taxon>Thermococci</taxon>
        <taxon>Thermococcales</taxon>
        <taxon>Thermococcaceae</taxon>
        <taxon>Thermococcus</taxon>
    </lineage>
</organism>
<proteinExistence type="inferred from homology"/>
<dbReference type="EC" id="6.3.1.5" evidence="1"/>
<dbReference type="EMBL" id="CP001463">
    <property type="protein sequence ID" value="ACS90810.1"/>
    <property type="molecule type" value="Genomic_DNA"/>
</dbReference>
<dbReference type="RefSeq" id="WP_015850026.1">
    <property type="nucleotide sequence ID" value="NC_012883.1"/>
</dbReference>
<dbReference type="SMR" id="C6A5B5"/>
<dbReference type="STRING" id="604354.TSIB_1759"/>
<dbReference type="GeneID" id="8096769"/>
<dbReference type="KEGG" id="tsi:TSIB_1759"/>
<dbReference type="eggNOG" id="arCOG00069">
    <property type="taxonomic scope" value="Archaea"/>
</dbReference>
<dbReference type="HOGENOM" id="CLU_059327_1_1_2"/>
<dbReference type="OrthoDB" id="39312at2157"/>
<dbReference type="UniPathway" id="UPA00253">
    <property type="reaction ID" value="UER00333"/>
</dbReference>
<dbReference type="Proteomes" id="UP000009079">
    <property type="component" value="Chromosome"/>
</dbReference>
<dbReference type="GO" id="GO:0005737">
    <property type="term" value="C:cytoplasm"/>
    <property type="evidence" value="ECO:0007669"/>
    <property type="project" value="InterPro"/>
</dbReference>
<dbReference type="GO" id="GO:0005524">
    <property type="term" value="F:ATP binding"/>
    <property type="evidence" value="ECO:0007669"/>
    <property type="project" value="UniProtKB-UniRule"/>
</dbReference>
<dbReference type="GO" id="GO:0004359">
    <property type="term" value="F:glutaminase activity"/>
    <property type="evidence" value="ECO:0007669"/>
    <property type="project" value="InterPro"/>
</dbReference>
<dbReference type="GO" id="GO:0046872">
    <property type="term" value="F:metal ion binding"/>
    <property type="evidence" value="ECO:0007669"/>
    <property type="project" value="UniProtKB-KW"/>
</dbReference>
<dbReference type="GO" id="GO:0003952">
    <property type="term" value="F:NAD+ synthase (glutamine-hydrolyzing) activity"/>
    <property type="evidence" value="ECO:0007669"/>
    <property type="project" value="InterPro"/>
</dbReference>
<dbReference type="GO" id="GO:0008795">
    <property type="term" value="F:NAD+ synthase activity"/>
    <property type="evidence" value="ECO:0007669"/>
    <property type="project" value="UniProtKB-UniRule"/>
</dbReference>
<dbReference type="GO" id="GO:0009435">
    <property type="term" value="P:NAD biosynthetic process"/>
    <property type="evidence" value="ECO:0007669"/>
    <property type="project" value="UniProtKB-UniRule"/>
</dbReference>
<dbReference type="CDD" id="cd00553">
    <property type="entry name" value="NAD_synthase"/>
    <property type="match status" value="1"/>
</dbReference>
<dbReference type="FunFam" id="3.40.50.620:FF:000106">
    <property type="entry name" value="Glutamine-dependent NAD(+) synthetase"/>
    <property type="match status" value="1"/>
</dbReference>
<dbReference type="Gene3D" id="3.40.50.620">
    <property type="entry name" value="HUPs"/>
    <property type="match status" value="1"/>
</dbReference>
<dbReference type="HAMAP" id="MF_00193">
    <property type="entry name" value="NadE_ammonia_dep"/>
    <property type="match status" value="1"/>
</dbReference>
<dbReference type="InterPro" id="IPR022310">
    <property type="entry name" value="NAD/GMP_synthase"/>
</dbReference>
<dbReference type="InterPro" id="IPR003694">
    <property type="entry name" value="NAD_synthase"/>
</dbReference>
<dbReference type="InterPro" id="IPR022926">
    <property type="entry name" value="NH(3)-dep_NAD(+)_synth"/>
</dbReference>
<dbReference type="InterPro" id="IPR014729">
    <property type="entry name" value="Rossmann-like_a/b/a_fold"/>
</dbReference>
<dbReference type="NCBIfam" id="TIGR00552">
    <property type="entry name" value="nadE"/>
    <property type="match status" value="1"/>
</dbReference>
<dbReference type="NCBIfam" id="NF010587">
    <property type="entry name" value="PRK13980.1"/>
    <property type="match status" value="1"/>
</dbReference>
<dbReference type="PANTHER" id="PTHR23090:SF9">
    <property type="entry name" value="GLUTAMINE-DEPENDENT NAD(+) SYNTHETASE"/>
    <property type="match status" value="1"/>
</dbReference>
<dbReference type="PANTHER" id="PTHR23090">
    <property type="entry name" value="NH 3 /GLUTAMINE-DEPENDENT NAD + SYNTHETASE"/>
    <property type="match status" value="1"/>
</dbReference>
<dbReference type="Pfam" id="PF02540">
    <property type="entry name" value="NAD_synthase"/>
    <property type="match status" value="1"/>
</dbReference>
<dbReference type="SUPFAM" id="SSF52402">
    <property type="entry name" value="Adenine nucleotide alpha hydrolases-like"/>
    <property type="match status" value="1"/>
</dbReference>
<comment type="function">
    <text evidence="1">Catalyzes the ATP-dependent amidation of deamido-NAD to form NAD. Uses ammonia as a nitrogen source.</text>
</comment>
<comment type="catalytic activity">
    <reaction evidence="1">
        <text>deamido-NAD(+) + NH4(+) + ATP = AMP + diphosphate + NAD(+) + H(+)</text>
        <dbReference type="Rhea" id="RHEA:21188"/>
        <dbReference type="ChEBI" id="CHEBI:15378"/>
        <dbReference type="ChEBI" id="CHEBI:28938"/>
        <dbReference type="ChEBI" id="CHEBI:30616"/>
        <dbReference type="ChEBI" id="CHEBI:33019"/>
        <dbReference type="ChEBI" id="CHEBI:57540"/>
        <dbReference type="ChEBI" id="CHEBI:58437"/>
        <dbReference type="ChEBI" id="CHEBI:456215"/>
        <dbReference type="EC" id="6.3.1.5"/>
    </reaction>
</comment>
<comment type="pathway">
    <text evidence="1">Cofactor biosynthesis; NAD(+) biosynthesis; NAD(+) from deamido-NAD(+) (ammonia route): step 1/1.</text>
</comment>
<comment type="subunit">
    <text evidence="1">Homodimer.</text>
</comment>
<comment type="similarity">
    <text evidence="1">Belongs to the NAD synthetase family.</text>
</comment>
<evidence type="ECO:0000255" key="1">
    <source>
        <dbReference type="HAMAP-Rule" id="MF_00193"/>
    </source>
</evidence>
<accession>C6A5B5</accession>
<keyword id="KW-0067">ATP-binding</keyword>
<keyword id="KW-0436">Ligase</keyword>
<keyword id="KW-0460">Magnesium</keyword>
<keyword id="KW-0479">Metal-binding</keyword>
<keyword id="KW-0520">NAD</keyword>
<keyword id="KW-0547">Nucleotide-binding</keyword>
<keyword id="KW-1185">Reference proteome</keyword>
<protein>
    <recommendedName>
        <fullName evidence="1">NH(3)-dependent NAD(+) synthetase</fullName>
        <ecNumber evidence="1">6.3.1.5</ecNumber>
    </recommendedName>
</protein>